<name>GPD1_SACUV</name>
<gene>
    <name type="primary">GPD1</name>
</gene>
<accession>Q6J5J3</accession>
<dbReference type="EC" id="1.1.1.8"/>
<dbReference type="EMBL" id="AY598967">
    <property type="protein sequence ID" value="AAT27377.1"/>
    <property type="molecule type" value="Genomic_DNA"/>
</dbReference>
<dbReference type="SMR" id="Q6J5J3"/>
<dbReference type="GO" id="GO:0005829">
    <property type="term" value="C:cytosol"/>
    <property type="evidence" value="ECO:0007669"/>
    <property type="project" value="TreeGrafter"/>
</dbReference>
<dbReference type="GO" id="GO:0005634">
    <property type="term" value="C:nucleus"/>
    <property type="evidence" value="ECO:0007669"/>
    <property type="project" value="TreeGrafter"/>
</dbReference>
<dbReference type="GO" id="GO:0141152">
    <property type="term" value="F:glycerol-3-phosphate dehydrogenase (NAD+) activity"/>
    <property type="evidence" value="ECO:0007669"/>
    <property type="project" value="UniProtKB-EC"/>
</dbReference>
<dbReference type="GO" id="GO:0051287">
    <property type="term" value="F:NAD binding"/>
    <property type="evidence" value="ECO:0007669"/>
    <property type="project" value="InterPro"/>
</dbReference>
<dbReference type="GO" id="GO:0042803">
    <property type="term" value="F:protein homodimerization activity"/>
    <property type="evidence" value="ECO:0007669"/>
    <property type="project" value="InterPro"/>
</dbReference>
<dbReference type="GO" id="GO:0005975">
    <property type="term" value="P:carbohydrate metabolic process"/>
    <property type="evidence" value="ECO:0007669"/>
    <property type="project" value="InterPro"/>
</dbReference>
<dbReference type="GO" id="GO:0046168">
    <property type="term" value="P:glycerol-3-phosphate catabolic process"/>
    <property type="evidence" value="ECO:0007669"/>
    <property type="project" value="InterPro"/>
</dbReference>
<dbReference type="FunFam" id="1.10.1040.10:FF:000004">
    <property type="entry name" value="Glycerol-3-phosphate dehydrogenase [NAD(+)]"/>
    <property type="match status" value="1"/>
</dbReference>
<dbReference type="FunFam" id="3.40.50.720:FF:000294">
    <property type="entry name" value="Glycerol-3-phosphate dehydrogenase [NAD(+)]"/>
    <property type="match status" value="1"/>
</dbReference>
<dbReference type="Gene3D" id="1.10.1040.10">
    <property type="entry name" value="N-(1-d-carboxylethyl)-l-norvaline Dehydrogenase, domain 2"/>
    <property type="match status" value="1"/>
</dbReference>
<dbReference type="Gene3D" id="3.40.50.720">
    <property type="entry name" value="NAD(P)-binding Rossmann-like Domain"/>
    <property type="match status" value="1"/>
</dbReference>
<dbReference type="InterPro" id="IPR008927">
    <property type="entry name" value="6-PGluconate_DH-like_C_sf"/>
</dbReference>
<dbReference type="InterPro" id="IPR013328">
    <property type="entry name" value="6PGD_dom2"/>
</dbReference>
<dbReference type="InterPro" id="IPR006168">
    <property type="entry name" value="G3P_DH_NAD-dep"/>
</dbReference>
<dbReference type="InterPro" id="IPR006109">
    <property type="entry name" value="G3P_DH_NAD-dep_C"/>
</dbReference>
<dbReference type="InterPro" id="IPR017751">
    <property type="entry name" value="G3P_DH_NAD-dep_euk"/>
</dbReference>
<dbReference type="InterPro" id="IPR011128">
    <property type="entry name" value="G3P_DH_NAD-dep_N"/>
</dbReference>
<dbReference type="InterPro" id="IPR036291">
    <property type="entry name" value="NAD(P)-bd_dom_sf"/>
</dbReference>
<dbReference type="NCBIfam" id="TIGR03376">
    <property type="entry name" value="glycerol3P_DH"/>
    <property type="match status" value="1"/>
</dbReference>
<dbReference type="PANTHER" id="PTHR11728">
    <property type="entry name" value="GLYCEROL-3-PHOSPHATE DEHYDROGENASE"/>
    <property type="match status" value="1"/>
</dbReference>
<dbReference type="PANTHER" id="PTHR11728:SF8">
    <property type="entry name" value="GLYCEROL-3-PHOSPHATE DEHYDROGENASE [NAD(+)]-RELATED"/>
    <property type="match status" value="1"/>
</dbReference>
<dbReference type="Pfam" id="PF07479">
    <property type="entry name" value="NAD_Gly3P_dh_C"/>
    <property type="match status" value="1"/>
</dbReference>
<dbReference type="Pfam" id="PF01210">
    <property type="entry name" value="NAD_Gly3P_dh_N"/>
    <property type="match status" value="1"/>
</dbReference>
<dbReference type="PIRSF" id="PIRSF000114">
    <property type="entry name" value="Glycerol-3-P_dh"/>
    <property type="match status" value="1"/>
</dbReference>
<dbReference type="PRINTS" id="PR00077">
    <property type="entry name" value="GPDHDRGNASE"/>
</dbReference>
<dbReference type="SUPFAM" id="SSF48179">
    <property type="entry name" value="6-phosphogluconate dehydrogenase C-terminal domain-like"/>
    <property type="match status" value="1"/>
</dbReference>
<dbReference type="SUPFAM" id="SSF51735">
    <property type="entry name" value="NAD(P)-binding Rossmann-fold domains"/>
    <property type="match status" value="1"/>
</dbReference>
<dbReference type="PROSITE" id="PS00957">
    <property type="entry name" value="NAD_G3PDH"/>
    <property type="match status" value="1"/>
</dbReference>
<keyword id="KW-0963">Cytoplasm</keyword>
<keyword id="KW-0520">NAD</keyword>
<keyword id="KW-0560">Oxidoreductase</keyword>
<organism>
    <name type="scientific">Saccharomyces uvarum</name>
    <name type="common">Yeast</name>
    <name type="synonym">Saccharomyces bayanus var. uvarum</name>
    <dbReference type="NCBI Taxonomy" id="230603"/>
    <lineage>
        <taxon>Eukaryota</taxon>
        <taxon>Fungi</taxon>
        <taxon>Dikarya</taxon>
        <taxon>Ascomycota</taxon>
        <taxon>Saccharomycotina</taxon>
        <taxon>Saccharomycetes</taxon>
        <taxon>Saccharomycetales</taxon>
        <taxon>Saccharomycetaceae</taxon>
        <taxon>Saccharomyces</taxon>
    </lineage>
</organism>
<evidence type="ECO:0000250" key="1"/>
<evidence type="ECO:0000305" key="2"/>
<protein>
    <recommendedName>
        <fullName>Glycerol-3-phosphate dehydrogenase [NAD(+)] 1</fullName>
        <ecNumber>1.1.1.8</ecNumber>
    </recommendedName>
</protein>
<sequence>MSAAADRLNLTSGHLNAGRKRSSSSVSLKAAEKPFKVTVIGSGNWGTTIAKVVAENCKGYPEVFAPIVQMWVFEEEINGEKLTEIINTRHQNVKYLPGITLPDNLVANPDLIDSVKDVDIIVFNIPHQFLPRICSQLKGHVDSHVRAISCLKGFEVGAKGVQLLSSYITEELGIQCGALSGANIATEVAQEHWSETTVAYHIPKDFRGEGKDVDHKVLKALFHRPYFHVSVIEDVAGISICGALKNVVALGCGFVEGLGWGNNASAAIQRVGLGEIIRFGQMFFPESREETYYQESAGVADLITTCAGGRNVKVARLMATSGKDAWECEKELLNGQSAQGLITCKEVHEWLETCGSVEDFPLFEAVYQIVYNNYPMKNLPDMIEELDLHED</sequence>
<proteinExistence type="inferred from homology"/>
<reference key="1">
    <citation type="submission" date="2004-05" db="EMBL/GenBank/DDBJ databases">
        <title>Research on the mechanism of osmotolerance and thermotolerance of yeast.</title>
        <authorList>
            <person name="Ma X."/>
            <person name="Guo Y."/>
            <person name="Zhang F."/>
            <person name="Yu H."/>
            <person name="Kuang J."/>
            <person name="Yao J."/>
            <person name="Li Z."/>
            <person name="He G."/>
        </authorList>
    </citation>
    <scope>NUCLEOTIDE SEQUENCE [GENOMIC DNA]</scope>
    <source>
        <strain>YY</strain>
    </source>
</reference>
<feature type="chain" id="PRO_0000138099" description="Glycerol-3-phosphate dehydrogenase [NAD(+)] 1">
    <location>
        <begin position="1"/>
        <end position="391"/>
    </location>
</feature>
<feature type="active site" description="Proton acceptor" evidence="1">
    <location>
        <position position="245"/>
    </location>
</feature>
<feature type="binding site" evidence="1">
    <location>
        <begin position="41"/>
        <end position="46"/>
    </location>
    <ligand>
        <name>NAD(+)</name>
        <dbReference type="ChEBI" id="CHEBI:57540"/>
    </ligand>
</feature>
<feature type="binding site" evidence="1">
    <location>
        <position position="129"/>
    </location>
    <ligand>
        <name>NAD(+)</name>
        <dbReference type="ChEBI" id="CHEBI:57540"/>
    </ligand>
</feature>
<feature type="binding site" evidence="1">
    <location>
        <position position="152"/>
    </location>
    <ligand>
        <name>NAD(+)</name>
        <dbReference type="ChEBI" id="CHEBI:57540"/>
    </ligand>
</feature>
<feature type="binding site" evidence="1">
    <location>
        <position position="152"/>
    </location>
    <ligand>
        <name>substrate</name>
    </ligand>
</feature>
<feature type="binding site" evidence="1">
    <location>
        <position position="185"/>
    </location>
    <ligand>
        <name>NAD(+)</name>
        <dbReference type="ChEBI" id="CHEBI:57540"/>
    </ligand>
</feature>
<feature type="binding site" evidence="1">
    <location>
        <begin position="310"/>
        <end position="311"/>
    </location>
    <ligand>
        <name>substrate</name>
    </ligand>
</feature>
<feature type="binding site" evidence="1">
    <location>
        <position position="310"/>
    </location>
    <ligand>
        <name>NAD(+)</name>
        <dbReference type="ChEBI" id="CHEBI:57540"/>
    </ligand>
</feature>
<feature type="binding site" evidence="1">
    <location>
        <position position="339"/>
    </location>
    <ligand>
        <name>NAD(+)</name>
        <dbReference type="ChEBI" id="CHEBI:57540"/>
    </ligand>
</feature>
<comment type="catalytic activity">
    <reaction>
        <text>sn-glycerol 3-phosphate + NAD(+) = dihydroxyacetone phosphate + NADH + H(+)</text>
        <dbReference type="Rhea" id="RHEA:11092"/>
        <dbReference type="ChEBI" id="CHEBI:15378"/>
        <dbReference type="ChEBI" id="CHEBI:57540"/>
        <dbReference type="ChEBI" id="CHEBI:57597"/>
        <dbReference type="ChEBI" id="CHEBI:57642"/>
        <dbReference type="ChEBI" id="CHEBI:57945"/>
        <dbReference type="EC" id="1.1.1.8"/>
    </reaction>
</comment>
<comment type="subcellular location">
    <subcellularLocation>
        <location evidence="2">Cytoplasm</location>
    </subcellularLocation>
</comment>
<comment type="similarity">
    <text evidence="2">Belongs to the NAD-dependent glycerol-3-phosphate dehydrogenase family.</text>
</comment>